<keyword id="KW-1185">Reference proteome</keyword>
<keyword id="KW-0687">Ribonucleoprotein</keyword>
<keyword id="KW-0689">Ribosomal protein</keyword>
<keyword id="KW-0694">RNA-binding</keyword>
<keyword id="KW-0699">rRNA-binding</keyword>
<sequence length="122" mass="13456">MIQMQSTLDVACNSGARRVQCIKVLGGSHRRYAGIGDIIKVSVKEAIPRAKAKKGDVYNAVVVRTKKGVRRPDGSVIRFDRNAAVLLNNNLQPIGTRIFGPVTRELRNEQFMKIVSLAPEVL</sequence>
<protein>
    <recommendedName>
        <fullName evidence="1">Large ribosomal subunit protein uL14</fullName>
    </recommendedName>
    <alternativeName>
        <fullName evidence="2">50S ribosomal protein L14</fullName>
    </alternativeName>
</protein>
<feature type="chain" id="PRO_1000055696" description="Large ribosomal subunit protein uL14">
    <location>
        <begin position="1"/>
        <end position="122"/>
    </location>
</feature>
<dbReference type="EMBL" id="CP000563">
    <property type="protein sequence ID" value="ABN63625.1"/>
    <property type="molecule type" value="Genomic_DNA"/>
</dbReference>
<dbReference type="RefSeq" id="WP_006083590.1">
    <property type="nucleotide sequence ID" value="NC_009052.1"/>
</dbReference>
<dbReference type="SMR" id="A3DA62"/>
<dbReference type="STRING" id="325240.Sbal_4160"/>
<dbReference type="GeneID" id="75190608"/>
<dbReference type="KEGG" id="sbl:Sbal_4160"/>
<dbReference type="HOGENOM" id="CLU_095071_2_1_6"/>
<dbReference type="OrthoDB" id="9806379at2"/>
<dbReference type="Proteomes" id="UP000001557">
    <property type="component" value="Chromosome"/>
</dbReference>
<dbReference type="GO" id="GO:0022625">
    <property type="term" value="C:cytosolic large ribosomal subunit"/>
    <property type="evidence" value="ECO:0007669"/>
    <property type="project" value="TreeGrafter"/>
</dbReference>
<dbReference type="GO" id="GO:0070180">
    <property type="term" value="F:large ribosomal subunit rRNA binding"/>
    <property type="evidence" value="ECO:0007669"/>
    <property type="project" value="TreeGrafter"/>
</dbReference>
<dbReference type="GO" id="GO:0003735">
    <property type="term" value="F:structural constituent of ribosome"/>
    <property type="evidence" value="ECO:0007669"/>
    <property type="project" value="InterPro"/>
</dbReference>
<dbReference type="GO" id="GO:0006412">
    <property type="term" value="P:translation"/>
    <property type="evidence" value="ECO:0007669"/>
    <property type="project" value="UniProtKB-UniRule"/>
</dbReference>
<dbReference type="CDD" id="cd00337">
    <property type="entry name" value="Ribosomal_uL14"/>
    <property type="match status" value="1"/>
</dbReference>
<dbReference type="FunFam" id="2.40.150.20:FF:000001">
    <property type="entry name" value="50S ribosomal protein L14"/>
    <property type="match status" value="1"/>
</dbReference>
<dbReference type="Gene3D" id="2.40.150.20">
    <property type="entry name" value="Ribosomal protein L14"/>
    <property type="match status" value="1"/>
</dbReference>
<dbReference type="HAMAP" id="MF_01367">
    <property type="entry name" value="Ribosomal_uL14"/>
    <property type="match status" value="1"/>
</dbReference>
<dbReference type="InterPro" id="IPR000218">
    <property type="entry name" value="Ribosomal_uL14"/>
</dbReference>
<dbReference type="InterPro" id="IPR005745">
    <property type="entry name" value="Ribosomal_uL14_bac-type"/>
</dbReference>
<dbReference type="InterPro" id="IPR019972">
    <property type="entry name" value="Ribosomal_uL14_CS"/>
</dbReference>
<dbReference type="InterPro" id="IPR036853">
    <property type="entry name" value="Ribosomal_uL14_sf"/>
</dbReference>
<dbReference type="NCBIfam" id="TIGR01067">
    <property type="entry name" value="rplN_bact"/>
    <property type="match status" value="1"/>
</dbReference>
<dbReference type="PANTHER" id="PTHR11761">
    <property type="entry name" value="50S/60S RIBOSOMAL PROTEIN L14/L23"/>
    <property type="match status" value="1"/>
</dbReference>
<dbReference type="PANTHER" id="PTHR11761:SF3">
    <property type="entry name" value="LARGE RIBOSOMAL SUBUNIT PROTEIN UL14M"/>
    <property type="match status" value="1"/>
</dbReference>
<dbReference type="Pfam" id="PF00238">
    <property type="entry name" value="Ribosomal_L14"/>
    <property type="match status" value="1"/>
</dbReference>
<dbReference type="SMART" id="SM01374">
    <property type="entry name" value="Ribosomal_L14"/>
    <property type="match status" value="1"/>
</dbReference>
<dbReference type="SUPFAM" id="SSF50193">
    <property type="entry name" value="Ribosomal protein L14"/>
    <property type="match status" value="1"/>
</dbReference>
<dbReference type="PROSITE" id="PS00049">
    <property type="entry name" value="RIBOSOMAL_L14"/>
    <property type="match status" value="1"/>
</dbReference>
<name>RL14_SHEB5</name>
<comment type="function">
    <text evidence="1">Binds to 23S rRNA. Forms part of two intersubunit bridges in the 70S ribosome.</text>
</comment>
<comment type="subunit">
    <text evidence="1">Part of the 50S ribosomal subunit. Forms a cluster with proteins L3 and L19. In the 70S ribosome, L14 and L19 interact and together make contacts with the 16S rRNA in bridges B5 and B8.</text>
</comment>
<comment type="similarity">
    <text evidence="1">Belongs to the universal ribosomal protein uL14 family.</text>
</comment>
<evidence type="ECO:0000255" key="1">
    <source>
        <dbReference type="HAMAP-Rule" id="MF_01367"/>
    </source>
</evidence>
<evidence type="ECO:0000305" key="2"/>
<gene>
    <name evidence="1" type="primary">rplN</name>
    <name type="ordered locus">Sbal_4160</name>
</gene>
<proteinExistence type="inferred from homology"/>
<accession>A3DA62</accession>
<reference key="1">
    <citation type="submission" date="2007-02" db="EMBL/GenBank/DDBJ databases">
        <title>Complete sequence of chromosome of Shewanella baltica OS155.</title>
        <authorList>
            <consortium name="US DOE Joint Genome Institute"/>
            <person name="Copeland A."/>
            <person name="Lucas S."/>
            <person name="Lapidus A."/>
            <person name="Barry K."/>
            <person name="Detter J.C."/>
            <person name="Glavina del Rio T."/>
            <person name="Hammon N."/>
            <person name="Israni S."/>
            <person name="Dalin E."/>
            <person name="Tice H."/>
            <person name="Pitluck S."/>
            <person name="Sims D.R."/>
            <person name="Brettin T."/>
            <person name="Bruce D."/>
            <person name="Han C."/>
            <person name="Tapia R."/>
            <person name="Brainard J."/>
            <person name="Schmutz J."/>
            <person name="Larimer F."/>
            <person name="Land M."/>
            <person name="Hauser L."/>
            <person name="Kyrpides N."/>
            <person name="Mikhailova N."/>
            <person name="Brettar I."/>
            <person name="Klappenbach J."/>
            <person name="Konstantinidis K."/>
            <person name="Rodrigues J."/>
            <person name="Tiedje J."/>
            <person name="Richardson P."/>
        </authorList>
    </citation>
    <scope>NUCLEOTIDE SEQUENCE [LARGE SCALE GENOMIC DNA]</scope>
    <source>
        <strain>OS155 / ATCC BAA-1091</strain>
    </source>
</reference>
<organism>
    <name type="scientific">Shewanella baltica (strain OS155 / ATCC BAA-1091)</name>
    <dbReference type="NCBI Taxonomy" id="325240"/>
    <lineage>
        <taxon>Bacteria</taxon>
        <taxon>Pseudomonadati</taxon>
        <taxon>Pseudomonadota</taxon>
        <taxon>Gammaproteobacteria</taxon>
        <taxon>Alteromonadales</taxon>
        <taxon>Shewanellaceae</taxon>
        <taxon>Shewanella</taxon>
    </lineage>
</organism>